<proteinExistence type="inferred from homology"/>
<gene>
    <name evidence="1" type="primary">prmC</name>
    <name type="synonym">hemK</name>
    <name type="ordered locus">SF1215</name>
    <name type="ordered locus">S1299</name>
</gene>
<dbReference type="EC" id="2.1.1.297" evidence="1"/>
<dbReference type="EMBL" id="AE005674">
    <property type="protein sequence ID" value="AAN42828.1"/>
    <property type="molecule type" value="Genomic_DNA"/>
</dbReference>
<dbReference type="EMBL" id="AE014073">
    <property type="protein sequence ID" value="AAP16714.1"/>
    <property type="molecule type" value="Genomic_DNA"/>
</dbReference>
<dbReference type="RefSeq" id="NP_707121.1">
    <property type="nucleotide sequence ID" value="NC_004337.2"/>
</dbReference>
<dbReference type="RefSeq" id="WP_000456467.1">
    <property type="nucleotide sequence ID" value="NZ_WPGW01000029.1"/>
</dbReference>
<dbReference type="SMR" id="P0ACC2"/>
<dbReference type="STRING" id="198214.SF1215"/>
<dbReference type="PaxDb" id="198214-SF1215"/>
<dbReference type="GeneID" id="1024180"/>
<dbReference type="GeneID" id="75171323"/>
<dbReference type="KEGG" id="sfl:SF1215"/>
<dbReference type="KEGG" id="sfx:S1299"/>
<dbReference type="PATRIC" id="fig|198214.7.peg.1432"/>
<dbReference type="HOGENOM" id="CLU_018398_3_1_6"/>
<dbReference type="Proteomes" id="UP000001006">
    <property type="component" value="Chromosome"/>
</dbReference>
<dbReference type="Proteomes" id="UP000002673">
    <property type="component" value="Chromosome"/>
</dbReference>
<dbReference type="GO" id="GO:0003676">
    <property type="term" value="F:nucleic acid binding"/>
    <property type="evidence" value="ECO:0007669"/>
    <property type="project" value="InterPro"/>
</dbReference>
<dbReference type="GO" id="GO:0102559">
    <property type="term" value="F:protein-(glutamine-N5) methyltransferase activity"/>
    <property type="evidence" value="ECO:0007669"/>
    <property type="project" value="UniProtKB-EC"/>
</dbReference>
<dbReference type="GO" id="GO:0036009">
    <property type="term" value="F:protein-glutamine N-methyltransferase activity"/>
    <property type="evidence" value="ECO:0007669"/>
    <property type="project" value="UniProtKB-UniRule"/>
</dbReference>
<dbReference type="GO" id="GO:0032259">
    <property type="term" value="P:methylation"/>
    <property type="evidence" value="ECO:0007669"/>
    <property type="project" value="UniProtKB-KW"/>
</dbReference>
<dbReference type="CDD" id="cd02440">
    <property type="entry name" value="AdoMet_MTases"/>
    <property type="match status" value="1"/>
</dbReference>
<dbReference type="FunFam" id="1.10.8.10:FF:000032">
    <property type="entry name" value="Release factor glutamine methyltransferase"/>
    <property type="match status" value="1"/>
</dbReference>
<dbReference type="FunFam" id="3.40.50.150:FF:000053">
    <property type="entry name" value="Release factor glutamine methyltransferase"/>
    <property type="match status" value="1"/>
</dbReference>
<dbReference type="Gene3D" id="1.10.8.10">
    <property type="entry name" value="DNA helicase RuvA subunit, C-terminal domain"/>
    <property type="match status" value="1"/>
</dbReference>
<dbReference type="Gene3D" id="3.40.50.150">
    <property type="entry name" value="Vaccinia Virus protein VP39"/>
    <property type="match status" value="1"/>
</dbReference>
<dbReference type="HAMAP" id="MF_02126">
    <property type="entry name" value="RF_methyltr_PrmC"/>
    <property type="match status" value="1"/>
</dbReference>
<dbReference type="InterPro" id="IPR002052">
    <property type="entry name" value="DNA_methylase_N6_adenine_CS"/>
</dbReference>
<dbReference type="InterPro" id="IPR004556">
    <property type="entry name" value="HemK-like"/>
</dbReference>
<dbReference type="InterPro" id="IPR050320">
    <property type="entry name" value="N5-glutamine_MTase"/>
</dbReference>
<dbReference type="InterPro" id="IPR040758">
    <property type="entry name" value="PrmC_N"/>
</dbReference>
<dbReference type="InterPro" id="IPR019874">
    <property type="entry name" value="RF_methyltr_PrmC"/>
</dbReference>
<dbReference type="InterPro" id="IPR029063">
    <property type="entry name" value="SAM-dependent_MTases_sf"/>
</dbReference>
<dbReference type="InterPro" id="IPR007848">
    <property type="entry name" value="Small_mtfrase_dom"/>
</dbReference>
<dbReference type="NCBIfam" id="TIGR00536">
    <property type="entry name" value="hemK_fam"/>
    <property type="match status" value="1"/>
</dbReference>
<dbReference type="NCBIfam" id="TIGR03534">
    <property type="entry name" value="RF_mod_PrmC"/>
    <property type="match status" value="1"/>
</dbReference>
<dbReference type="PANTHER" id="PTHR18895">
    <property type="entry name" value="HEMK METHYLTRANSFERASE"/>
    <property type="match status" value="1"/>
</dbReference>
<dbReference type="PANTHER" id="PTHR18895:SF74">
    <property type="entry name" value="MTRF1L RELEASE FACTOR GLUTAMINE METHYLTRANSFERASE"/>
    <property type="match status" value="1"/>
</dbReference>
<dbReference type="Pfam" id="PF05175">
    <property type="entry name" value="MTS"/>
    <property type="match status" value="1"/>
</dbReference>
<dbReference type="Pfam" id="PF17827">
    <property type="entry name" value="PrmC_N"/>
    <property type="match status" value="1"/>
</dbReference>
<dbReference type="SUPFAM" id="SSF53335">
    <property type="entry name" value="S-adenosyl-L-methionine-dependent methyltransferases"/>
    <property type="match status" value="1"/>
</dbReference>
<reference key="1">
    <citation type="journal article" date="2002" name="Nucleic Acids Res.">
        <title>Genome sequence of Shigella flexneri 2a: insights into pathogenicity through comparison with genomes of Escherichia coli K12 and O157.</title>
        <authorList>
            <person name="Jin Q."/>
            <person name="Yuan Z."/>
            <person name="Xu J."/>
            <person name="Wang Y."/>
            <person name="Shen Y."/>
            <person name="Lu W."/>
            <person name="Wang J."/>
            <person name="Liu H."/>
            <person name="Yang J."/>
            <person name="Yang F."/>
            <person name="Zhang X."/>
            <person name="Zhang J."/>
            <person name="Yang G."/>
            <person name="Wu H."/>
            <person name="Qu D."/>
            <person name="Dong J."/>
            <person name="Sun L."/>
            <person name="Xue Y."/>
            <person name="Zhao A."/>
            <person name="Gao Y."/>
            <person name="Zhu J."/>
            <person name="Kan B."/>
            <person name="Ding K."/>
            <person name="Chen S."/>
            <person name="Cheng H."/>
            <person name="Yao Z."/>
            <person name="He B."/>
            <person name="Chen R."/>
            <person name="Ma D."/>
            <person name="Qiang B."/>
            <person name="Wen Y."/>
            <person name="Hou Y."/>
            <person name="Yu J."/>
        </authorList>
    </citation>
    <scope>NUCLEOTIDE SEQUENCE [LARGE SCALE GENOMIC DNA]</scope>
    <source>
        <strain>301 / Serotype 2a</strain>
    </source>
</reference>
<reference key="2">
    <citation type="journal article" date="2003" name="Infect. Immun.">
        <title>Complete genome sequence and comparative genomics of Shigella flexneri serotype 2a strain 2457T.</title>
        <authorList>
            <person name="Wei J."/>
            <person name="Goldberg M.B."/>
            <person name="Burland V."/>
            <person name="Venkatesan M.M."/>
            <person name="Deng W."/>
            <person name="Fournier G."/>
            <person name="Mayhew G.F."/>
            <person name="Plunkett G. III"/>
            <person name="Rose D.J."/>
            <person name="Darling A."/>
            <person name="Mau B."/>
            <person name="Perna N.T."/>
            <person name="Payne S.M."/>
            <person name="Runyen-Janecky L.J."/>
            <person name="Zhou S."/>
            <person name="Schwartz D.C."/>
            <person name="Blattner F.R."/>
        </authorList>
    </citation>
    <scope>NUCLEOTIDE SEQUENCE [LARGE SCALE GENOMIC DNA]</scope>
    <source>
        <strain>ATCC 700930 / 2457T / Serotype 2a</strain>
    </source>
</reference>
<protein>
    <recommendedName>
        <fullName evidence="1">Release factor glutamine methyltransferase</fullName>
        <shortName evidence="1">RF MTase</shortName>
        <ecNumber evidence="1">2.1.1.297</ecNumber>
    </recommendedName>
    <alternativeName>
        <fullName evidence="1">N5-glutamine methyltransferase PrmC</fullName>
    </alternativeName>
    <alternativeName>
        <fullName evidence="1">Protein-(glutamine-N5) MTase PrmC</fullName>
    </alternativeName>
    <alternativeName>
        <fullName evidence="1">Protein-glutamine N-methyltransferase PrmC</fullName>
    </alternativeName>
</protein>
<name>PRMC_SHIFL</name>
<feature type="chain" id="PRO_0000157158" description="Release factor glutamine methyltransferase">
    <location>
        <begin position="1"/>
        <end position="277"/>
    </location>
</feature>
<feature type="binding site" evidence="1">
    <location>
        <begin position="117"/>
        <end position="121"/>
    </location>
    <ligand>
        <name>S-adenosyl-L-methionine</name>
        <dbReference type="ChEBI" id="CHEBI:59789"/>
    </ligand>
</feature>
<feature type="binding site" evidence="1">
    <location>
        <position position="140"/>
    </location>
    <ligand>
        <name>S-adenosyl-L-methionine</name>
        <dbReference type="ChEBI" id="CHEBI:59789"/>
    </ligand>
</feature>
<feature type="binding site" evidence="1">
    <location>
        <position position="168"/>
    </location>
    <ligand>
        <name>S-adenosyl-L-methionine</name>
        <dbReference type="ChEBI" id="CHEBI:59789"/>
    </ligand>
</feature>
<feature type="binding site" evidence="1">
    <location>
        <begin position="183"/>
        <end position="186"/>
    </location>
    <ligand>
        <name>substrate</name>
    </ligand>
</feature>
<feature type="binding site" evidence="1">
    <location>
        <position position="183"/>
    </location>
    <ligand>
        <name>S-adenosyl-L-methionine</name>
        <dbReference type="ChEBI" id="CHEBI:59789"/>
    </ligand>
</feature>
<sequence>MEYQHWLREAISQLQASESPRRDAEILLEHVTGRGRTFILAFGETQLTDEQCQQLDALLTRRRDGEPIAHLTGVREFWSLPLFVSPATLIPRPDTECLVEQALARLPEQPCRILDLGTGTGAIALALASERPDCEIIAVDRMPDAVSLAQRNAQHLAIKNIHILQSDWFSALAGQQFAMIVSNPPYIDEQDPHLQQGDVRFEPLTALVAADSGMADIVHIIEQSRNALVSGGFLLLEHGWQQGEAVRQAFILAGYHDVETCRDYGDNERVTLGRYYQ</sequence>
<organism>
    <name type="scientific">Shigella flexneri</name>
    <dbReference type="NCBI Taxonomy" id="623"/>
    <lineage>
        <taxon>Bacteria</taxon>
        <taxon>Pseudomonadati</taxon>
        <taxon>Pseudomonadota</taxon>
        <taxon>Gammaproteobacteria</taxon>
        <taxon>Enterobacterales</taxon>
        <taxon>Enterobacteriaceae</taxon>
        <taxon>Shigella</taxon>
    </lineage>
</organism>
<comment type="function">
    <text evidence="1">Methylates the class 1 translation termination release factors RF1/PrfA and RF2/PrfB on the glutamine residue of the universally conserved GGQ motif.</text>
</comment>
<comment type="catalytic activity">
    <reaction evidence="1">
        <text>L-glutaminyl-[peptide chain release factor] + S-adenosyl-L-methionine = N(5)-methyl-L-glutaminyl-[peptide chain release factor] + S-adenosyl-L-homocysteine + H(+)</text>
        <dbReference type="Rhea" id="RHEA:42896"/>
        <dbReference type="Rhea" id="RHEA-COMP:10271"/>
        <dbReference type="Rhea" id="RHEA-COMP:10272"/>
        <dbReference type="ChEBI" id="CHEBI:15378"/>
        <dbReference type="ChEBI" id="CHEBI:30011"/>
        <dbReference type="ChEBI" id="CHEBI:57856"/>
        <dbReference type="ChEBI" id="CHEBI:59789"/>
        <dbReference type="ChEBI" id="CHEBI:61891"/>
        <dbReference type="EC" id="2.1.1.297"/>
    </reaction>
</comment>
<comment type="similarity">
    <text evidence="1">Belongs to the protein N5-glutamine methyltransferase family. PrmC subfamily.</text>
</comment>
<evidence type="ECO:0000255" key="1">
    <source>
        <dbReference type="HAMAP-Rule" id="MF_02126"/>
    </source>
</evidence>
<accession>P0ACC2</accession>
<accession>P37186</accession>
<accession>Q46754</accession>
<keyword id="KW-0489">Methyltransferase</keyword>
<keyword id="KW-1185">Reference proteome</keyword>
<keyword id="KW-0949">S-adenosyl-L-methionine</keyword>
<keyword id="KW-0808">Transferase</keyword>